<name>RLMN_XANOM</name>
<keyword id="KW-0004">4Fe-4S</keyword>
<keyword id="KW-0963">Cytoplasm</keyword>
<keyword id="KW-1015">Disulfide bond</keyword>
<keyword id="KW-0408">Iron</keyword>
<keyword id="KW-0411">Iron-sulfur</keyword>
<keyword id="KW-0479">Metal-binding</keyword>
<keyword id="KW-0489">Methyltransferase</keyword>
<keyword id="KW-0698">rRNA processing</keyword>
<keyword id="KW-0949">S-adenosyl-L-methionine</keyword>
<keyword id="KW-0808">Transferase</keyword>
<keyword id="KW-0819">tRNA processing</keyword>
<dbReference type="EC" id="2.1.1.192" evidence="1"/>
<dbReference type="EMBL" id="AP008229">
    <property type="protein sequence ID" value="BAE69147.1"/>
    <property type="molecule type" value="Genomic_DNA"/>
</dbReference>
<dbReference type="SMR" id="Q2P2T0"/>
<dbReference type="KEGG" id="xom:XOO2392"/>
<dbReference type="HOGENOM" id="CLU_029101_0_0_6"/>
<dbReference type="GO" id="GO:0005737">
    <property type="term" value="C:cytoplasm"/>
    <property type="evidence" value="ECO:0007669"/>
    <property type="project" value="UniProtKB-SubCell"/>
</dbReference>
<dbReference type="GO" id="GO:0051539">
    <property type="term" value="F:4 iron, 4 sulfur cluster binding"/>
    <property type="evidence" value="ECO:0007669"/>
    <property type="project" value="UniProtKB-UniRule"/>
</dbReference>
<dbReference type="GO" id="GO:0046872">
    <property type="term" value="F:metal ion binding"/>
    <property type="evidence" value="ECO:0007669"/>
    <property type="project" value="UniProtKB-KW"/>
</dbReference>
<dbReference type="GO" id="GO:0070040">
    <property type="term" value="F:rRNA (adenine(2503)-C2-)-methyltransferase activity"/>
    <property type="evidence" value="ECO:0007669"/>
    <property type="project" value="UniProtKB-UniRule"/>
</dbReference>
<dbReference type="GO" id="GO:0019843">
    <property type="term" value="F:rRNA binding"/>
    <property type="evidence" value="ECO:0007669"/>
    <property type="project" value="UniProtKB-UniRule"/>
</dbReference>
<dbReference type="GO" id="GO:0002935">
    <property type="term" value="F:tRNA (adenine(37)-C2)-methyltransferase activity"/>
    <property type="evidence" value="ECO:0007669"/>
    <property type="project" value="UniProtKB-UniRule"/>
</dbReference>
<dbReference type="GO" id="GO:0000049">
    <property type="term" value="F:tRNA binding"/>
    <property type="evidence" value="ECO:0007669"/>
    <property type="project" value="UniProtKB-UniRule"/>
</dbReference>
<dbReference type="GO" id="GO:0070475">
    <property type="term" value="P:rRNA base methylation"/>
    <property type="evidence" value="ECO:0007669"/>
    <property type="project" value="UniProtKB-UniRule"/>
</dbReference>
<dbReference type="GO" id="GO:0030488">
    <property type="term" value="P:tRNA methylation"/>
    <property type="evidence" value="ECO:0007669"/>
    <property type="project" value="UniProtKB-UniRule"/>
</dbReference>
<dbReference type="CDD" id="cd01335">
    <property type="entry name" value="Radical_SAM"/>
    <property type="match status" value="1"/>
</dbReference>
<dbReference type="FunFam" id="1.10.150.530:FF:000003">
    <property type="entry name" value="Dual-specificity RNA methyltransferase RlmN"/>
    <property type="match status" value="1"/>
</dbReference>
<dbReference type="FunFam" id="3.20.20.70:FF:000008">
    <property type="entry name" value="Dual-specificity RNA methyltransferase RlmN"/>
    <property type="match status" value="1"/>
</dbReference>
<dbReference type="Gene3D" id="1.10.150.530">
    <property type="match status" value="1"/>
</dbReference>
<dbReference type="Gene3D" id="3.20.20.70">
    <property type="entry name" value="Aldolase class I"/>
    <property type="match status" value="1"/>
</dbReference>
<dbReference type="HAMAP" id="MF_01849">
    <property type="entry name" value="RNA_methyltr_RlmN"/>
    <property type="match status" value="1"/>
</dbReference>
<dbReference type="InterPro" id="IPR013785">
    <property type="entry name" value="Aldolase_TIM"/>
</dbReference>
<dbReference type="InterPro" id="IPR040072">
    <property type="entry name" value="Methyltransferase_A"/>
</dbReference>
<dbReference type="InterPro" id="IPR048641">
    <property type="entry name" value="RlmN_N"/>
</dbReference>
<dbReference type="InterPro" id="IPR027492">
    <property type="entry name" value="RNA_MTrfase_RlmN"/>
</dbReference>
<dbReference type="InterPro" id="IPR004383">
    <property type="entry name" value="rRNA_lsu_MTrfase_RlmN/Cfr"/>
</dbReference>
<dbReference type="InterPro" id="IPR007197">
    <property type="entry name" value="rSAM"/>
</dbReference>
<dbReference type="NCBIfam" id="TIGR00048">
    <property type="entry name" value="rRNA_mod_RlmN"/>
    <property type="match status" value="1"/>
</dbReference>
<dbReference type="PANTHER" id="PTHR30544">
    <property type="entry name" value="23S RRNA METHYLTRANSFERASE"/>
    <property type="match status" value="1"/>
</dbReference>
<dbReference type="PANTHER" id="PTHR30544:SF5">
    <property type="entry name" value="RADICAL SAM CORE DOMAIN-CONTAINING PROTEIN"/>
    <property type="match status" value="1"/>
</dbReference>
<dbReference type="Pfam" id="PF04055">
    <property type="entry name" value="Radical_SAM"/>
    <property type="match status" value="1"/>
</dbReference>
<dbReference type="Pfam" id="PF21016">
    <property type="entry name" value="RlmN_N"/>
    <property type="match status" value="1"/>
</dbReference>
<dbReference type="PIRSF" id="PIRSF006004">
    <property type="entry name" value="CHP00048"/>
    <property type="match status" value="1"/>
</dbReference>
<dbReference type="SFLD" id="SFLDF00275">
    <property type="entry name" value="adenosine_C2_methyltransferase"/>
    <property type="match status" value="1"/>
</dbReference>
<dbReference type="SFLD" id="SFLDG01062">
    <property type="entry name" value="methyltransferase_(Class_A)"/>
    <property type="match status" value="1"/>
</dbReference>
<dbReference type="SUPFAM" id="SSF102114">
    <property type="entry name" value="Radical SAM enzymes"/>
    <property type="match status" value="1"/>
</dbReference>
<dbReference type="PROSITE" id="PS51918">
    <property type="entry name" value="RADICAL_SAM"/>
    <property type="match status" value="1"/>
</dbReference>
<comment type="function">
    <text evidence="1">Specifically methylates position 2 of adenine 2503 in 23S rRNA and position 2 of adenine 37 in tRNAs. m2A2503 modification seems to play a crucial role in the proofreading step occurring at the peptidyl transferase center and thus would serve to optimize ribosomal fidelity.</text>
</comment>
<comment type="catalytic activity">
    <reaction evidence="1">
        <text>adenosine(2503) in 23S rRNA + 2 reduced [2Fe-2S]-[ferredoxin] + 2 S-adenosyl-L-methionine = 2-methyladenosine(2503) in 23S rRNA + 5'-deoxyadenosine + L-methionine + 2 oxidized [2Fe-2S]-[ferredoxin] + S-adenosyl-L-homocysteine</text>
        <dbReference type="Rhea" id="RHEA:42916"/>
        <dbReference type="Rhea" id="RHEA-COMP:10000"/>
        <dbReference type="Rhea" id="RHEA-COMP:10001"/>
        <dbReference type="Rhea" id="RHEA-COMP:10152"/>
        <dbReference type="Rhea" id="RHEA-COMP:10282"/>
        <dbReference type="ChEBI" id="CHEBI:17319"/>
        <dbReference type="ChEBI" id="CHEBI:33737"/>
        <dbReference type="ChEBI" id="CHEBI:33738"/>
        <dbReference type="ChEBI" id="CHEBI:57844"/>
        <dbReference type="ChEBI" id="CHEBI:57856"/>
        <dbReference type="ChEBI" id="CHEBI:59789"/>
        <dbReference type="ChEBI" id="CHEBI:74411"/>
        <dbReference type="ChEBI" id="CHEBI:74497"/>
        <dbReference type="EC" id="2.1.1.192"/>
    </reaction>
</comment>
<comment type="catalytic activity">
    <reaction evidence="1">
        <text>adenosine(37) in tRNA + 2 reduced [2Fe-2S]-[ferredoxin] + 2 S-adenosyl-L-methionine = 2-methyladenosine(37) in tRNA + 5'-deoxyadenosine + L-methionine + 2 oxidized [2Fe-2S]-[ferredoxin] + S-adenosyl-L-homocysteine</text>
        <dbReference type="Rhea" id="RHEA:43332"/>
        <dbReference type="Rhea" id="RHEA-COMP:10000"/>
        <dbReference type="Rhea" id="RHEA-COMP:10001"/>
        <dbReference type="Rhea" id="RHEA-COMP:10162"/>
        <dbReference type="Rhea" id="RHEA-COMP:10485"/>
        <dbReference type="ChEBI" id="CHEBI:17319"/>
        <dbReference type="ChEBI" id="CHEBI:33737"/>
        <dbReference type="ChEBI" id="CHEBI:33738"/>
        <dbReference type="ChEBI" id="CHEBI:57844"/>
        <dbReference type="ChEBI" id="CHEBI:57856"/>
        <dbReference type="ChEBI" id="CHEBI:59789"/>
        <dbReference type="ChEBI" id="CHEBI:74411"/>
        <dbReference type="ChEBI" id="CHEBI:74497"/>
        <dbReference type="EC" id="2.1.1.192"/>
    </reaction>
</comment>
<comment type="cofactor">
    <cofactor evidence="1">
        <name>[4Fe-4S] cluster</name>
        <dbReference type="ChEBI" id="CHEBI:49883"/>
    </cofactor>
    <text evidence="1">Binds 1 [4Fe-4S] cluster. The cluster is coordinated with 3 cysteines and an exchangeable S-adenosyl-L-methionine.</text>
</comment>
<comment type="subcellular location">
    <subcellularLocation>
        <location evidence="1">Cytoplasm</location>
    </subcellularLocation>
</comment>
<comment type="miscellaneous">
    <text evidence="1">Reaction proceeds by a ping-pong mechanism involving intermediate methylation of a conserved cysteine residue.</text>
</comment>
<comment type="similarity">
    <text evidence="1">Belongs to the radical SAM superfamily. RlmN family.</text>
</comment>
<accession>Q2P2T0</accession>
<organism>
    <name type="scientific">Xanthomonas oryzae pv. oryzae (strain MAFF 311018)</name>
    <dbReference type="NCBI Taxonomy" id="342109"/>
    <lineage>
        <taxon>Bacteria</taxon>
        <taxon>Pseudomonadati</taxon>
        <taxon>Pseudomonadota</taxon>
        <taxon>Gammaproteobacteria</taxon>
        <taxon>Lysobacterales</taxon>
        <taxon>Lysobacteraceae</taxon>
        <taxon>Xanthomonas</taxon>
    </lineage>
</organism>
<feature type="chain" id="PRO_0000350531" description="Dual-specificity RNA methyltransferase RlmN">
    <location>
        <begin position="1"/>
        <end position="401"/>
    </location>
</feature>
<feature type="domain" description="Radical SAM core" evidence="2">
    <location>
        <begin position="120"/>
        <end position="365"/>
    </location>
</feature>
<feature type="active site" description="Proton acceptor" evidence="1">
    <location>
        <position position="114"/>
    </location>
</feature>
<feature type="active site" description="S-methylcysteine intermediate" evidence="1">
    <location>
        <position position="370"/>
    </location>
</feature>
<feature type="binding site" evidence="1">
    <location>
        <position position="134"/>
    </location>
    <ligand>
        <name>[4Fe-4S] cluster</name>
        <dbReference type="ChEBI" id="CHEBI:49883"/>
        <note>4Fe-4S-S-AdoMet</note>
    </ligand>
</feature>
<feature type="binding site" evidence="1">
    <location>
        <position position="138"/>
    </location>
    <ligand>
        <name>[4Fe-4S] cluster</name>
        <dbReference type="ChEBI" id="CHEBI:49883"/>
        <note>4Fe-4S-S-AdoMet</note>
    </ligand>
</feature>
<feature type="binding site" evidence="1">
    <location>
        <position position="141"/>
    </location>
    <ligand>
        <name>[4Fe-4S] cluster</name>
        <dbReference type="ChEBI" id="CHEBI:49883"/>
        <note>4Fe-4S-S-AdoMet</note>
    </ligand>
</feature>
<feature type="binding site" evidence="1">
    <location>
        <begin position="187"/>
        <end position="188"/>
    </location>
    <ligand>
        <name>S-adenosyl-L-methionine</name>
        <dbReference type="ChEBI" id="CHEBI:59789"/>
    </ligand>
</feature>
<feature type="binding site" evidence="1">
    <location>
        <position position="219"/>
    </location>
    <ligand>
        <name>S-adenosyl-L-methionine</name>
        <dbReference type="ChEBI" id="CHEBI:59789"/>
    </ligand>
</feature>
<feature type="binding site" evidence="1">
    <location>
        <begin position="241"/>
        <end position="243"/>
    </location>
    <ligand>
        <name>S-adenosyl-L-methionine</name>
        <dbReference type="ChEBI" id="CHEBI:59789"/>
    </ligand>
</feature>
<feature type="binding site" evidence="1">
    <location>
        <position position="327"/>
    </location>
    <ligand>
        <name>S-adenosyl-L-methionine</name>
        <dbReference type="ChEBI" id="CHEBI:59789"/>
    </ligand>
</feature>
<feature type="disulfide bond" description="(transient)" evidence="1">
    <location>
        <begin position="127"/>
        <end position="370"/>
    </location>
</feature>
<protein>
    <recommendedName>
        <fullName evidence="1">Dual-specificity RNA methyltransferase RlmN</fullName>
        <ecNumber evidence="1">2.1.1.192</ecNumber>
    </recommendedName>
    <alternativeName>
        <fullName evidence="1">23S rRNA (adenine(2503)-C(2))-methyltransferase</fullName>
    </alternativeName>
    <alternativeName>
        <fullName evidence="1">23S rRNA m2A2503 methyltransferase</fullName>
    </alternativeName>
    <alternativeName>
        <fullName evidence="1">Ribosomal RNA large subunit methyltransferase N</fullName>
    </alternativeName>
    <alternativeName>
        <fullName evidence="1">tRNA (adenine(37)-C(2))-methyltransferase</fullName>
    </alternativeName>
    <alternativeName>
        <fullName evidence="1">tRNA m2A37 methyltransferase</fullName>
    </alternativeName>
</protein>
<proteinExistence type="inferred from homology"/>
<sequence length="401" mass="44981">MNEVVIPSVLQDVPVRTSEPRKQNLLDLDREGLERFFADTLGEARYRAHQVMKWIHHRYVTDFDHMTDLGKALRAKLHQHAEVLVPNVVFDKPSTDGTHKWLLAMGTDGKNAIETVYIPDKGRGTLCVSSQVGCGLNCSFCSTATQGFNRNLTTAEIIGQVWVAARHLGNVPHQQRRLTNVVMMGMGEPLMNFDNVVRAMSVMRDDLGYGLASKRVTLSTSGLVPMIDRLSTESDVSLAVSLHAANDALRETLVPLNKKYPIAELMESCARYLRGSKKRDSVTFEYTLMKGINDQPEHARQLARLMRQFDNAVQSKDAGKVNLIPFNPFPGTRYERSGETEIRAFQKILLDAQVLTIVRRTRGDDIDAACGQLKGQVMDRTRRQAEFRRTLEGQADRDAAA</sequence>
<reference key="1">
    <citation type="journal article" date="2005" name="Jpn. Agric. Res. Q.">
        <title>Genome sequence of Xanthomonas oryzae pv. oryzae suggests contribution of large numbers of effector genes and insertion sequences to its race diversity.</title>
        <authorList>
            <person name="Ochiai H."/>
            <person name="Inoue Y."/>
            <person name="Takeya M."/>
            <person name="Sasaki A."/>
            <person name="Kaku H."/>
        </authorList>
    </citation>
    <scope>NUCLEOTIDE SEQUENCE [LARGE SCALE GENOMIC DNA]</scope>
    <source>
        <strain>MAFF 311018</strain>
    </source>
</reference>
<gene>
    <name evidence="1" type="primary">rlmN</name>
    <name type="ordered locus">XOO2392</name>
</gene>
<evidence type="ECO:0000255" key="1">
    <source>
        <dbReference type="HAMAP-Rule" id="MF_01849"/>
    </source>
</evidence>
<evidence type="ECO:0000255" key="2">
    <source>
        <dbReference type="PROSITE-ProRule" id="PRU01266"/>
    </source>
</evidence>